<gene>
    <name evidence="1" type="primary">rpmA</name>
    <name evidence="1" type="synonym">rpl27</name>
    <name type="ordered locus">A9601_15461</name>
</gene>
<accession>A2BSR8</accession>
<feature type="chain" id="PRO_1000017553" description="Large ribosomal subunit protein bL27">
    <location>
        <begin position="1"/>
        <end position="86"/>
    </location>
</feature>
<feature type="region of interest" description="Disordered" evidence="2">
    <location>
        <begin position="1"/>
        <end position="24"/>
    </location>
</feature>
<name>RL27_PROMS</name>
<proteinExistence type="inferred from homology"/>
<dbReference type="EMBL" id="CP000551">
    <property type="protein sequence ID" value="ABM70829.1"/>
    <property type="molecule type" value="Genomic_DNA"/>
</dbReference>
<dbReference type="RefSeq" id="WP_011818961.1">
    <property type="nucleotide sequence ID" value="NC_008816.1"/>
</dbReference>
<dbReference type="SMR" id="A2BSR8"/>
<dbReference type="STRING" id="146891.A9601_15461"/>
<dbReference type="KEGG" id="pmb:A9601_15461"/>
<dbReference type="eggNOG" id="COG0211">
    <property type="taxonomic scope" value="Bacteria"/>
</dbReference>
<dbReference type="HOGENOM" id="CLU_095424_4_0_3"/>
<dbReference type="OrthoDB" id="9803474at2"/>
<dbReference type="Proteomes" id="UP000002590">
    <property type="component" value="Chromosome"/>
</dbReference>
<dbReference type="GO" id="GO:0022625">
    <property type="term" value="C:cytosolic large ribosomal subunit"/>
    <property type="evidence" value="ECO:0007669"/>
    <property type="project" value="TreeGrafter"/>
</dbReference>
<dbReference type="GO" id="GO:0003735">
    <property type="term" value="F:structural constituent of ribosome"/>
    <property type="evidence" value="ECO:0007669"/>
    <property type="project" value="InterPro"/>
</dbReference>
<dbReference type="GO" id="GO:0006412">
    <property type="term" value="P:translation"/>
    <property type="evidence" value="ECO:0007669"/>
    <property type="project" value="UniProtKB-UniRule"/>
</dbReference>
<dbReference type="FunFam" id="2.40.50.100:FF:000020">
    <property type="entry name" value="50S ribosomal protein L27"/>
    <property type="match status" value="1"/>
</dbReference>
<dbReference type="Gene3D" id="2.40.50.100">
    <property type="match status" value="1"/>
</dbReference>
<dbReference type="HAMAP" id="MF_00539">
    <property type="entry name" value="Ribosomal_bL27"/>
    <property type="match status" value="1"/>
</dbReference>
<dbReference type="InterPro" id="IPR001684">
    <property type="entry name" value="Ribosomal_bL27"/>
</dbReference>
<dbReference type="InterPro" id="IPR018261">
    <property type="entry name" value="Ribosomal_bL27_CS"/>
</dbReference>
<dbReference type="NCBIfam" id="TIGR00062">
    <property type="entry name" value="L27"/>
    <property type="match status" value="1"/>
</dbReference>
<dbReference type="PANTHER" id="PTHR15893:SF0">
    <property type="entry name" value="LARGE RIBOSOMAL SUBUNIT PROTEIN BL27M"/>
    <property type="match status" value="1"/>
</dbReference>
<dbReference type="PANTHER" id="PTHR15893">
    <property type="entry name" value="RIBOSOMAL PROTEIN L27"/>
    <property type="match status" value="1"/>
</dbReference>
<dbReference type="Pfam" id="PF01016">
    <property type="entry name" value="Ribosomal_L27"/>
    <property type="match status" value="1"/>
</dbReference>
<dbReference type="PRINTS" id="PR00063">
    <property type="entry name" value="RIBOSOMALL27"/>
</dbReference>
<dbReference type="SUPFAM" id="SSF110324">
    <property type="entry name" value="Ribosomal L27 protein-like"/>
    <property type="match status" value="1"/>
</dbReference>
<dbReference type="PROSITE" id="PS00831">
    <property type="entry name" value="RIBOSOMAL_L27"/>
    <property type="match status" value="1"/>
</dbReference>
<protein>
    <recommendedName>
        <fullName evidence="1">Large ribosomal subunit protein bL27</fullName>
    </recommendedName>
    <alternativeName>
        <fullName evidence="3">50S ribosomal protein L27</fullName>
    </alternativeName>
</protein>
<sequence>MAHKKGTGSTRNGRDSNSKRLGVKAYGGEKVTAGSILIRQRGTSFLPGNNVGIGKDDTLFALKEGTVSFESIKRNLKNRKRVNIVI</sequence>
<keyword id="KW-0687">Ribonucleoprotein</keyword>
<keyword id="KW-0689">Ribosomal protein</keyword>
<reference key="1">
    <citation type="journal article" date="2007" name="PLoS Genet.">
        <title>Patterns and implications of gene gain and loss in the evolution of Prochlorococcus.</title>
        <authorList>
            <person name="Kettler G.C."/>
            <person name="Martiny A.C."/>
            <person name="Huang K."/>
            <person name="Zucker J."/>
            <person name="Coleman M.L."/>
            <person name="Rodrigue S."/>
            <person name="Chen F."/>
            <person name="Lapidus A."/>
            <person name="Ferriera S."/>
            <person name="Johnson J."/>
            <person name="Steglich C."/>
            <person name="Church G.M."/>
            <person name="Richardson P."/>
            <person name="Chisholm S.W."/>
        </authorList>
    </citation>
    <scope>NUCLEOTIDE SEQUENCE [LARGE SCALE GENOMIC DNA]</scope>
    <source>
        <strain>AS9601</strain>
    </source>
</reference>
<organism>
    <name type="scientific">Prochlorococcus marinus (strain AS9601)</name>
    <dbReference type="NCBI Taxonomy" id="146891"/>
    <lineage>
        <taxon>Bacteria</taxon>
        <taxon>Bacillati</taxon>
        <taxon>Cyanobacteriota</taxon>
        <taxon>Cyanophyceae</taxon>
        <taxon>Synechococcales</taxon>
        <taxon>Prochlorococcaceae</taxon>
        <taxon>Prochlorococcus</taxon>
    </lineage>
</organism>
<evidence type="ECO:0000255" key="1">
    <source>
        <dbReference type="HAMAP-Rule" id="MF_00539"/>
    </source>
</evidence>
<evidence type="ECO:0000256" key="2">
    <source>
        <dbReference type="SAM" id="MobiDB-lite"/>
    </source>
</evidence>
<evidence type="ECO:0000305" key="3"/>
<comment type="similarity">
    <text evidence="1">Belongs to the bacterial ribosomal protein bL27 family.</text>
</comment>